<feature type="chain" id="PRO_0000447728" description="Hps1-dma1 cluster transcription factor tfc7">
    <location>
        <begin position="1"/>
        <end position="381"/>
    </location>
</feature>
<feature type="DNA-binding region" description="Zn(2)-C6 fungal-type" evidence="1">
    <location>
        <begin position="10"/>
        <end position="37"/>
    </location>
</feature>
<feature type="region of interest" description="Disordered" evidence="2">
    <location>
        <begin position="41"/>
        <end position="88"/>
    </location>
</feature>
<feature type="compositionally biased region" description="Polar residues" evidence="2">
    <location>
        <begin position="50"/>
        <end position="59"/>
    </location>
</feature>
<feature type="compositionally biased region" description="Polar residues" evidence="2">
    <location>
        <begin position="67"/>
        <end position="80"/>
    </location>
</feature>
<proteinExistence type="inferred from homology"/>
<sequence>MSTIKYRAACDHCSATKIKCTQERPQCTRCRALGRDCHYSRSLRAGKPPRSSQGLNRKISNAPVLPRQNTPVSNPTSMSSKPEHWPTMPTSYPTPQAAAPTAEIFHFPDLSSAATSSSSSPANTDWFFDFNSGSADGLGDLTPPLVVTAPHLPPLDHDLKHPVFPTQGIHFGAFADLISLPPASPLLPSPSLADGDRCAKLATETLNSLYDMPANHLHGSGNRHPSVDQTLSTCARAVQAIHELVNCSCQKDLYLPMLIIIVASKIVAWYQAVAYIRDPGTGFADGKQCFREVVVEGPLNIGAYQLDDEVGWTLKNQIVLGQLQRLNEAVNIYDRRYCSDSLGGQMTEGGKLYASMVGFVKSTLQFTIHALEGRIRSGHPR</sequence>
<gene>
    <name type="primary">tfc7</name>
    <name type="ORF">DOTSEDRAFT_83206</name>
</gene>
<name>TFC7_DOTSN</name>
<dbReference type="EMBL" id="KB446545">
    <property type="protein sequence ID" value="EME39732.1"/>
    <property type="molecule type" value="Genomic_DNA"/>
</dbReference>
<dbReference type="SMR" id="M2XJV1"/>
<dbReference type="EnsemblFungi" id="EME39732">
    <property type="protein sequence ID" value="EME39732"/>
    <property type="gene ID" value="DOTSEDRAFT_83206"/>
</dbReference>
<dbReference type="eggNOG" id="ENOG502RJXM">
    <property type="taxonomic scope" value="Eukaryota"/>
</dbReference>
<dbReference type="HOGENOM" id="CLU_035265_0_0_1"/>
<dbReference type="OMA" id="VIRESCN"/>
<dbReference type="OrthoDB" id="2943660at2759"/>
<dbReference type="Proteomes" id="UP000016933">
    <property type="component" value="Unassembled WGS sequence"/>
</dbReference>
<dbReference type="GO" id="GO:0005634">
    <property type="term" value="C:nucleus"/>
    <property type="evidence" value="ECO:0007669"/>
    <property type="project" value="UniProtKB-SubCell"/>
</dbReference>
<dbReference type="GO" id="GO:0003677">
    <property type="term" value="F:DNA binding"/>
    <property type="evidence" value="ECO:0007669"/>
    <property type="project" value="UniProtKB-KW"/>
</dbReference>
<dbReference type="GO" id="GO:0000981">
    <property type="term" value="F:DNA-binding transcription factor activity, RNA polymerase II-specific"/>
    <property type="evidence" value="ECO:0007669"/>
    <property type="project" value="InterPro"/>
</dbReference>
<dbReference type="GO" id="GO:0008270">
    <property type="term" value="F:zinc ion binding"/>
    <property type="evidence" value="ECO:0007669"/>
    <property type="project" value="InterPro"/>
</dbReference>
<dbReference type="GO" id="GO:0045122">
    <property type="term" value="P:aflatoxin biosynthetic process"/>
    <property type="evidence" value="ECO:0007669"/>
    <property type="project" value="InterPro"/>
</dbReference>
<dbReference type="CDD" id="cd00067">
    <property type="entry name" value="GAL4"/>
    <property type="match status" value="1"/>
</dbReference>
<dbReference type="Gene3D" id="4.10.240.10">
    <property type="entry name" value="Zn(2)-C6 fungal-type DNA-binding domain"/>
    <property type="match status" value="1"/>
</dbReference>
<dbReference type="InterPro" id="IPR013700">
    <property type="entry name" value="AflR"/>
</dbReference>
<dbReference type="InterPro" id="IPR050675">
    <property type="entry name" value="OAF3"/>
</dbReference>
<dbReference type="InterPro" id="IPR036864">
    <property type="entry name" value="Zn2-C6_fun-type_DNA-bd_sf"/>
</dbReference>
<dbReference type="InterPro" id="IPR001138">
    <property type="entry name" value="Zn2Cys6_DnaBD"/>
</dbReference>
<dbReference type="PANTHER" id="PTHR31069:SF31">
    <property type="entry name" value="MONODICTYPHENONE CLUSTER TRANSCRIPTION FACTOR-RELATED"/>
    <property type="match status" value="1"/>
</dbReference>
<dbReference type="PANTHER" id="PTHR31069">
    <property type="entry name" value="OLEATE-ACTIVATED TRANSCRIPTION FACTOR 1-RELATED"/>
    <property type="match status" value="1"/>
</dbReference>
<dbReference type="Pfam" id="PF08493">
    <property type="entry name" value="AflR"/>
    <property type="match status" value="1"/>
</dbReference>
<dbReference type="Pfam" id="PF00172">
    <property type="entry name" value="Zn_clus"/>
    <property type="match status" value="1"/>
</dbReference>
<dbReference type="PRINTS" id="PR00755">
    <property type="entry name" value="AFLATOXINBRP"/>
</dbReference>
<dbReference type="SMART" id="SM00066">
    <property type="entry name" value="GAL4"/>
    <property type="match status" value="1"/>
</dbReference>
<dbReference type="SUPFAM" id="SSF57701">
    <property type="entry name" value="Zn2/Cys6 DNA-binding domain"/>
    <property type="match status" value="1"/>
</dbReference>
<dbReference type="PROSITE" id="PS00463">
    <property type="entry name" value="ZN2_CY6_FUNGAL_1"/>
    <property type="match status" value="1"/>
</dbReference>
<dbReference type="PROSITE" id="PS50048">
    <property type="entry name" value="ZN2_CY6_FUNGAL_2"/>
    <property type="match status" value="1"/>
</dbReference>
<accession>M2XJV1</accession>
<comment type="function">
    <text evidence="4">Transcription factor that regulates the expression of the hps1-dma1 gene cluster that probably mediates the biosynthesis a derivative of cyclopiazonic acid (CPA) (Probable). Further studies are required to whether the CPA-like hps1-dma1 cluster is functional or a non-functional relic reflecting evolution of D.septosporum (Probable).</text>
</comment>
<comment type="subcellular location">
    <subcellularLocation>
        <location evidence="1">Nucleus</location>
    </subcellularLocation>
</comment>
<protein>
    <recommendedName>
        <fullName evidence="3">Hps1-dma1 cluster transcription factor tfc7</fullName>
    </recommendedName>
</protein>
<evidence type="ECO:0000255" key="1">
    <source>
        <dbReference type="PROSITE-ProRule" id="PRU00227"/>
    </source>
</evidence>
<evidence type="ECO:0000256" key="2">
    <source>
        <dbReference type="SAM" id="MobiDB-lite"/>
    </source>
</evidence>
<evidence type="ECO:0000303" key="3">
    <source>
    </source>
</evidence>
<evidence type="ECO:0000305" key="4">
    <source>
    </source>
</evidence>
<reference key="1">
    <citation type="journal article" date="2012" name="PLoS Genet.">
        <title>The genomes of the fungal plant pathogens Cladosporium fulvum and Dothistroma septosporum reveal adaptation to different hosts and lifestyles but also signatures of common ancestry.</title>
        <authorList>
            <person name="de Wit P.J.G.M."/>
            <person name="van der Burgt A."/>
            <person name="Oekmen B."/>
            <person name="Stergiopoulos I."/>
            <person name="Abd-Elsalam K.A."/>
            <person name="Aerts A.L."/>
            <person name="Bahkali A.H."/>
            <person name="Beenen H.G."/>
            <person name="Chettri P."/>
            <person name="Cox M.P."/>
            <person name="Datema E."/>
            <person name="de Vries R.P."/>
            <person name="Dhillon B."/>
            <person name="Ganley A.R."/>
            <person name="Griffiths S.A."/>
            <person name="Guo Y."/>
            <person name="Hamelin R.C."/>
            <person name="Henrissat B."/>
            <person name="Kabir M.S."/>
            <person name="Jashni M.K."/>
            <person name="Kema G."/>
            <person name="Klaubauf S."/>
            <person name="Lapidus A."/>
            <person name="Levasseur A."/>
            <person name="Lindquist E."/>
            <person name="Mehrabi R."/>
            <person name="Ohm R.A."/>
            <person name="Owen T.J."/>
            <person name="Salamov A."/>
            <person name="Schwelm A."/>
            <person name="Schijlen E."/>
            <person name="Sun H."/>
            <person name="van den Burg H.A."/>
            <person name="van Ham R.C.H.J."/>
            <person name="Zhang S."/>
            <person name="Goodwin S.B."/>
            <person name="Grigoriev I.V."/>
            <person name="Collemare J."/>
            <person name="Bradshaw R.E."/>
        </authorList>
    </citation>
    <scope>NUCLEOTIDE SEQUENCE [LARGE SCALE GENOMIC DNA]</scope>
    <source>
        <strain>NZE10 / CBS 128990</strain>
    </source>
</reference>
<reference key="2">
    <citation type="journal article" date="2012" name="PLoS Pathog.">
        <title>Diverse lifestyles and strategies of plant pathogenesis encoded in the genomes of eighteen Dothideomycetes fungi.</title>
        <authorList>
            <person name="Ohm R.A."/>
            <person name="Feau N."/>
            <person name="Henrissat B."/>
            <person name="Schoch C.L."/>
            <person name="Horwitz B.A."/>
            <person name="Barry K.W."/>
            <person name="Condon B.J."/>
            <person name="Copeland A.C."/>
            <person name="Dhillon B."/>
            <person name="Glaser F."/>
            <person name="Hesse C.N."/>
            <person name="Kosti I."/>
            <person name="LaButti K."/>
            <person name="Lindquist E.A."/>
            <person name="Lucas S."/>
            <person name="Salamov A.A."/>
            <person name="Bradshaw R.E."/>
            <person name="Ciuffetti L."/>
            <person name="Hamelin R.C."/>
            <person name="Kema G.H.J."/>
            <person name="Lawrence C."/>
            <person name="Scott J.A."/>
            <person name="Spatafora J.W."/>
            <person name="Turgeon B.G."/>
            <person name="de Wit P.J.G.M."/>
            <person name="Zhong S."/>
            <person name="Goodwin S.B."/>
            <person name="Grigoriev I.V."/>
        </authorList>
    </citation>
    <scope>NUCLEOTIDE SEQUENCE [LARGE SCALE GENOMIC DNA]</scope>
    <source>
        <strain>NZE10 / CBS 128990</strain>
    </source>
</reference>
<reference key="3">
    <citation type="journal article" date="2019" name="Fungal Biol.">
        <title>Evolutionary relics dominate the small number of secondary metabolism genes in the hemibiotrophic fungus Dothistroma septosporum.</title>
        <authorList>
            <person name="Ozturk I.K."/>
            <person name="Dupont P.Y."/>
            <person name="Chettri P."/>
            <person name="McDougal R."/>
            <person name="Boehl O.J."/>
            <person name="Cox R.J."/>
            <person name="Bradshaw R.E."/>
        </authorList>
    </citation>
    <scope>FUNCTION</scope>
</reference>
<keyword id="KW-0238">DNA-binding</keyword>
<keyword id="KW-0479">Metal-binding</keyword>
<keyword id="KW-0539">Nucleus</keyword>
<keyword id="KW-1185">Reference proteome</keyword>
<keyword id="KW-0804">Transcription</keyword>
<keyword id="KW-0805">Transcription regulation</keyword>
<keyword id="KW-0862">Zinc</keyword>
<organism>
    <name type="scientific">Dothistroma septosporum (strain NZE10 / CBS 128990)</name>
    <name type="common">Red band needle blight fungus</name>
    <name type="synonym">Mycosphaerella pini</name>
    <dbReference type="NCBI Taxonomy" id="675120"/>
    <lineage>
        <taxon>Eukaryota</taxon>
        <taxon>Fungi</taxon>
        <taxon>Dikarya</taxon>
        <taxon>Ascomycota</taxon>
        <taxon>Pezizomycotina</taxon>
        <taxon>Dothideomycetes</taxon>
        <taxon>Dothideomycetidae</taxon>
        <taxon>Mycosphaerellales</taxon>
        <taxon>Mycosphaerellaceae</taxon>
        <taxon>Dothistroma</taxon>
    </lineage>
</organism>